<protein>
    <recommendedName>
        <fullName evidence="1">ATP-dependent Clp protease ATP-binding subunit ClpX</fullName>
    </recommendedName>
</protein>
<gene>
    <name evidence="1" type="primary">clpX</name>
    <name type="ordered locus">BCAH820_4559</name>
</gene>
<name>CLPX_BACC0</name>
<organism>
    <name type="scientific">Bacillus cereus (strain AH820)</name>
    <dbReference type="NCBI Taxonomy" id="405535"/>
    <lineage>
        <taxon>Bacteria</taxon>
        <taxon>Bacillati</taxon>
        <taxon>Bacillota</taxon>
        <taxon>Bacilli</taxon>
        <taxon>Bacillales</taxon>
        <taxon>Bacillaceae</taxon>
        <taxon>Bacillus</taxon>
        <taxon>Bacillus cereus group</taxon>
    </lineage>
</organism>
<dbReference type="EMBL" id="CP001283">
    <property type="protein sequence ID" value="ACK91007.1"/>
    <property type="molecule type" value="Genomic_DNA"/>
</dbReference>
<dbReference type="RefSeq" id="WP_000472282.1">
    <property type="nucleotide sequence ID" value="NC_011773.1"/>
</dbReference>
<dbReference type="SMR" id="B7JQ65"/>
<dbReference type="GeneID" id="75087607"/>
<dbReference type="KEGG" id="bcu:BCAH820_4559"/>
<dbReference type="HOGENOM" id="CLU_014218_8_2_9"/>
<dbReference type="Proteomes" id="UP000001363">
    <property type="component" value="Chromosome"/>
</dbReference>
<dbReference type="GO" id="GO:0009376">
    <property type="term" value="C:HslUV protease complex"/>
    <property type="evidence" value="ECO:0007669"/>
    <property type="project" value="TreeGrafter"/>
</dbReference>
<dbReference type="GO" id="GO:0005524">
    <property type="term" value="F:ATP binding"/>
    <property type="evidence" value="ECO:0007669"/>
    <property type="project" value="UniProtKB-UniRule"/>
</dbReference>
<dbReference type="GO" id="GO:0016887">
    <property type="term" value="F:ATP hydrolysis activity"/>
    <property type="evidence" value="ECO:0007669"/>
    <property type="project" value="InterPro"/>
</dbReference>
<dbReference type="GO" id="GO:0140662">
    <property type="term" value="F:ATP-dependent protein folding chaperone"/>
    <property type="evidence" value="ECO:0007669"/>
    <property type="project" value="InterPro"/>
</dbReference>
<dbReference type="GO" id="GO:0046983">
    <property type="term" value="F:protein dimerization activity"/>
    <property type="evidence" value="ECO:0007669"/>
    <property type="project" value="InterPro"/>
</dbReference>
<dbReference type="GO" id="GO:0051082">
    <property type="term" value="F:unfolded protein binding"/>
    <property type="evidence" value="ECO:0007669"/>
    <property type="project" value="UniProtKB-UniRule"/>
</dbReference>
<dbReference type="GO" id="GO:0008270">
    <property type="term" value="F:zinc ion binding"/>
    <property type="evidence" value="ECO:0007669"/>
    <property type="project" value="InterPro"/>
</dbReference>
<dbReference type="GO" id="GO:0051301">
    <property type="term" value="P:cell division"/>
    <property type="evidence" value="ECO:0007669"/>
    <property type="project" value="TreeGrafter"/>
</dbReference>
<dbReference type="GO" id="GO:0051603">
    <property type="term" value="P:proteolysis involved in protein catabolic process"/>
    <property type="evidence" value="ECO:0007669"/>
    <property type="project" value="TreeGrafter"/>
</dbReference>
<dbReference type="CDD" id="cd19497">
    <property type="entry name" value="RecA-like_ClpX"/>
    <property type="match status" value="1"/>
</dbReference>
<dbReference type="FunFam" id="1.10.8.60:FF:000002">
    <property type="entry name" value="ATP-dependent Clp protease ATP-binding subunit ClpX"/>
    <property type="match status" value="1"/>
</dbReference>
<dbReference type="FunFam" id="3.40.50.300:FF:000005">
    <property type="entry name" value="ATP-dependent Clp protease ATP-binding subunit ClpX"/>
    <property type="match status" value="1"/>
</dbReference>
<dbReference type="Gene3D" id="1.10.8.60">
    <property type="match status" value="1"/>
</dbReference>
<dbReference type="Gene3D" id="6.20.220.10">
    <property type="entry name" value="ClpX chaperone, C4-type zinc finger domain"/>
    <property type="match status" value="1"/>
</dbReference>
<dbReference type="Gene3D" id="3.40.50.300">
    <property type="entry name" value="P-loop containing nucleotide triphosphate hydrolases"/>
    <property type="match status" value="1"/>
</dbReference>
<dbReference type="HAMAP" id="MF_00175">
    <property type="entry name" value="ClpX"/>
    <property type="match status" value="1"/>
</dbReference>
<dbReference type="InterPro" id="IPR003593">
    <property type="entry name" value="AAA+_ATPase"/>
</dbReference>
<dbReference type="InterPro" id="IPR050052">
    <property type="entry name" value="ATP-dep_Clp_protease_ClpX"/>
</dbReference>
<dbReference type="InterPro" id="IPR003959">
    <property type="entry name" value="ATPase_AAA_core"/>
</dbReference>
<dbReference type="InterPro" id="IPR019489">
    <property type="entry name" value="Clp_ATPase_C"/>
</dbReference>
<dbReference type="InterPro" id="IPR004487">
    <property type="entry name" value="Clp_protease_ATP-bd_su_ClpX"/>
</dbReference>
<dbReference type="InterPro" id="IPR046425">
    <property type="entry name" value="ClpX_bact"/>
</dbReference>
<dbReference type="InterPro" id="IPR027417">
    <property type="entry name" value="P-loop_NTPase"/>
</dbReference>
<dbReference type="InterPro" id="IPR010603">
    <property type="entry name" value="Znf_CppX_C4"/>
</dbReference>
<dbReference type="InterPro" id="IPR038366">
    <property type="entry name" value="Znf_CppX_C4_sf"/>
</dbReference>
<dbReference type="NCBIfam" id="TIGR00382">
    <property type="entry name" value="clpX"/>
    <property type="match status" value="1"/>
</dbReference>
<dbReference type="NCBIfam" id="NF003745">
    <property type="entry name" value="PRK05342.1"/>
    <property type="match status" value="1"/>
</dbReference>
<dbReference type="PANTHER" id="PTHR48102:SF7">
    <property type="entry name" value="ATP-DEPENDENT CLP PROTEASE ATP-BINDING SUBUNIT CLPX-LIKE, MITOCHONDRIAL"/>
    <property type="match status" value="1"/>
</dbReference>
<dbReference type="PANTHER" id="PTHR48102">
    <property type="entry name" value="ATP-DEPENDENT CLP PROTEASE ATP-BINDING SUBUNIT CLPX-LIKE, MITOCHONDRIAL-RELATED"/>
    <property type="match status" value="1"/>
</dbReference>
<dbReference type="Pfam" id="PF07724">
    <property type="entry name" value="AAA_2"/>
    <property type="match status" value="1"/>
</dbReference>
<dbReference type="Pfam" id="PF10431">
    <property type="entry name" value="ClpB_D2-small"/>
    <property type="match status" value="1"/>
</dbReference>
<dbReference type="Pfam" id="PF06689">
    <property type="entry name" value="zf-C4_ClpX"/>
    <property type="match status" value="1"/>
</dbReference>
<dbReference type="SMART" id="SM00382">
    <property type="entry name" value="AAA"/>
    <property type="match status" value="1"/>
</dbReference>
<dbReference type="SMART" id="SM01086">
    <property type="entry name" value="ClpB_D2-small"/>
    <property type="match status" value="1"/>
</dbReference>
<dbReference type="SMART" id="SM00994">
    <property type="entry name" value="zf-C4_ClpX"/>
    <property type="match status" value="1"/>
</dbReference>
<dbReference type="SUPFAM" id="SSF57716">
    <property type="entry name" value="Glucocorticoid receptor-like (DNA-binding domain)"/>
    <property type="match status" value="1"/>
</dbReference>
<dbReference type="SUPFAM" id="SSF52540">
    <property type="entry name" value="P-loop containing nucleoside triphosphate hydrolases"/>
    <property type="match status" value="1"/>
</dbReference>
<dbReference type="PROSITE" id="PS51902">
    <property type="entry name" value="CLPX_ZB"/>
    <property type="match status" value="1"/>
</dbReference>
<keyword id="KW-0067">ATP-binding</keyword>
<keyword id="KW-0143">Chaperone</keyword>
<keyword id="KW-0479">Metal-binding</keyword>
<keyword id="KW-0547">Nucleotide-binding</keyword>
<keyword id="KW-0862">Zinc</keyword>
<evidence type="ECO:0000255" key="1">
    <source>
        <dbReference type="HAMAP-Rule" id="MF_00175"/>
    </source>
</evidence>
<evidence type="ECO:0000255" key="2">
    <source>
        <dbReference type="PROSITE-ProRule" id="PRU01250"/>
    </source>
</evidence>
<feature type="chain" id="PRO_1000189680" description="ATP-dependent Clp protease ATP-binding subunit ClpX">
    <location>
        <begin position="1"/>
        <end position="419"/>
    </location>
</feature>
<feature type="domain" description="ClpX-type ZB" evidence="2">
    <location>
        <begin position="1"/>
        <end position="54"/>
    </location>
</feature>
<feature type="binding site" evidence="2">
    <location>
        <position position="13"/>
    </location>
    <ligand>
        <name>Zn(2+)</name>
        <dbReference type="ChEBI" id="CHEBI:29105"/>
    </ligand>
</feature>
<feature type="binding site" evidence="2">
    <location>
        <position position="16"/>
    </location>
    <ligand>
        <name>Zn(2+)</name>
        <dbReference type="ChEBI" id="CHEBI:29105"/>
    </ligand>
</feature>
<feature type="binding site" evidence="2">
    <location>
        <position position="35"/>
    </location>
    <ligand>
        <name>Zn(2+)</name>
        <dbReference type="ChEBI" id="CHEBI:29105"/>
    </ligand>
</feature>
<feature type="binding site" evidence="2">
    <location>
        <position position="38"/>
    </location>
    <ligand>
        <name>Zn(2+)</name>
        <dbReference type="ChEBI" id="CHEBI:29105"/>
    </ligand>
</feature>
<feature type="binding site" evidence="1">
    <location>
        <begin position="117"/>
        <end position="124"/>
    </location>
    <ligand>
        <name>ATP</name>
        <dbReference type="ChEBI" id="CHEBI:30616"/>
    </ligand>
</feature>
<proteinExistence type="inferred from homology"/>
<accession>B7JQ65</accession>
<sequence length="419" mass="46199">MFKFNDEKGQLKCSFCGKTQTQVRKLVAGPGVYICDECIELCTEIVQEELAKDEEVEFKDVPKPVEIREILDEYVIGQDNAKKALAVAVYNHYKRINSNSKIDDVELAKSNIALIGPTGSGKTLLAQTLARILNVPFAIADATSLTEAGYVGEDVENILLKLIQAADYDVEKAEKGIIYIDEIDKVARKSENPSITRDVSGEGVQQALLKILEGTVASVPPQGGRKHPHQEFIQIDTTNILFICGGAFDGIEPIIKRRLGEKVIGFGSEKKNADVNEKHVLSHVLPEDLLRFGLIPEFIGRLPVIANLEPLDEDALVDILTKPKNALVKQFQKLLELDDVELEFEEGALIEIAKKAIERKTGARGLRSIIEGLMLEVMFELPSRKDIEKCILTKETVADNAAPKLVLQDGTVLDTKTSA</sequence>
<comment type="function">
    <text evidence="1">ATP-dependent specificity component of the Clp protease. It directs the protease to specific substrates. Can perform chaperone functions in the absence of ClpP.</text>
</comment>
<comment type="subunit">
    <text evidence="1">Component of the ClpX-ClpP complex. Forms a hexameric ring that, in the presence of ATP, binds to fourteen ClpP subunits assembled into a disk-like structure with a central cavity, resembling the structure of eukaryotic proteasomes.</text>
</comment>
<comment type="similarity">
    <text evidence="1">Belongs to the ClpX chaperone family.</text>
</comment>
<reference key="1">
    <citation type="submission" date="2008-10" db="EMBL/GenBank/DDBJ databases">
        <title>Genome sequence of Bacillus cereus AH820.</title>
        <authorList>
            <person name="Dodson R.J."/>
            <person name="Durkin A.S."/>
            <person name="Rosovitz M.J."/>
            <person name="Rasko D.A."/>
            <person name="Hoffmaster A."/>
            <person name="Ravel J."/>
            <person name="Sutton G."/>
        </authorList>
    </citation>
    <scope>NUCLEOTIDE SEQUENCE [LARGE SCALE GENOMIC DNA]</scope>
    <source>
        <strain>AH820</strain>
    </source>
</reference>